<reference key="1">
    <citation type="journal article" date="2007" name="J. Bacteriol.">
        <title>The complete genome sequence of Bacillus thuringiensis Al Hakam.</title>
        <authorList>
            <person name="Challacombe J.F."/>
            <person name="Altherr M.R."/>
            <person name="Xie G."/>
            <person name="Bhotika S.S."/>
            <person name="Brown N."/>
            <person name="Bruce D."/>
            <person name="Campbell C.S."/>
            <person name="Campbell M.L."/>
            <person name="Chen J."/>
            <person name="Chertkov O."/>
            <person name="Cleland C."/>
            <person name="Dimitrijevic M."/>
            <person name="Doggett N.A."/>
            <person name="Fawcett J.J."/>
            <person name="Glavina T."/>
            <person name="Goodwin L.A."/>
            <person name="Green L.D."/>
            <person name="Han C.S."/>
            <person name="Hill K.K."/>
            <person name="Hitchcock P."/>
            <person name="Jackson P.J."/>
            <person name="Keim P."/>
            <person name="Kewalramani A.R."/>
            <person name="Longmire J."/>
            <person name="Lucas S."/>
            <person name="Malfatti S."/>
            <person name="Martinez D."/>
            <person name="McMurry K."/>
            <person name="Meincke L.J."/>
            <person name="Misra M."/>
            <person name="Moseman B.L."/>
            <person name="Mundt M."/>
            <person name="Munk A.C."/>
            <person name="Okinaka R.T."/>
            <person name="Parson-Quintana B."/>
            <person name="Reilly L.P."/>
            <person name="Richardson P."/>
            <person name="Robinson D.L."/>
            <person name="Saunders E."/>
            <person name="Tapia R."/>
            <person name="Tesmer J.G."/>
            <person name="Thayer N."/>
            <person name="Thompson L.S."/>
            <person name="Tice H."/>
            <person name="Ticknor L.O."/>
            <person name="Wills P.L."/>
            <person name="Gilna P."/>
            <person name="Brettin T.S."/>
        </authorList>
    </citation>
    <scope>NUCLEOTIDE SEQUENCE [LARGE SCALE GENOMIC DNA]</scope>
    <source>
        <strain>Al Hakam</strain>
    </source>
</reference>
<evidence type="ECO:0000255" key="1">
    <source>
        <dbReference type="HAMAP-Rule" id="MF_01006"/>
    </source>
</evidence>
<evidence type="ECO:0000305" key="2"/>
<keyword id="KW-0046">Antibiotic resistance</keyword>
<keyword id="KW-1003">Cell membrane</keyword>
<keyword id="KW-0133">Cell shape</keyword>
<keyword id="KW-0961">Cell wall biogenesis/degradation</keyword>
<keyword id="KW-0378">Hydrolase</keyword>
<keyword id="KW-0472">Membrane</keyword>
<keyword id="KW-0573">Peptidoglycan synthesis</keyword>
<keyword id="KW-0812">Transmembrane</keyword>
<keyword id="KW-1133">Transmembrane helix</keyword>
<feature type="chain" id="PRO_0000290686" description="Undecaprenyl-diphosphatase 3">
    <location>
        <begin position="1"/>
        <end position="254"/>
    </location>
</feature>
<feature type="transmembrane region" description="Helical" evidence="1">
    <location>
        <begin position="8"/>
        <end position="28"/>
    </location>
</feature>
<feature type="transmembrane region" description="Helical" evidence="1">
    <location>
        <begin position="33"/>
        <end position="53"/>
    </location>
</feature>
<feature type="transmembrane region" description="Helical" evidence="1">
    <location>
        <begin position="74"/>
        <end position="94"/>
    </location>
</feature>
<feature type="transmembrane region" description="Helical" evidence="1">
    <location>
        <begin position="97"/>
        <end position="117"/>
    </location>
</feature>
<feature type="transmembrane region" description="Helical" evidence="1">
    <location>
        <begin position="133"/>
        <end position="153"/>
    </location>
</feature>
<feature type="transmembrane region" description="Helical" evidence="1">
    <location>
        <begin position="174"/>
        <end position="194"/>
    </location>
</feature>
<feature type="transmembrane region" description="Helical" evidence="1">
    <location>
        <begin position="207"/>
        <end position="227"/>
    </location>
</feature>
<feature type="transmembrane region" description="Helical" evidence="1">
    <location>
        <begin position="233"/>
        <end position="253"/>
    </location>
</feature>
<gene>
    <name evidence="1" type="primary">uppP3</name>
    <name type="ordered locus">BALH_1240</name>
</gene>
<protein>
    <recommendedName>
        <fullName evidence="1">Undecaprenyl-diphosphatase 3</fullName>
        <ecNumber evidence="1">3.6.1.27</ecNumber>
    </recommendedName>
    <alternativeName>
        <fullName evidence="1">Bacitracin resistance protein 3</fullName>
    </alternativeName>
    <alternativeName>
        <fullName evidence="1">Undecaprenyl pyrophosphate phosphatase 3</fullName>
    </alternativeName>
</protein>
<dbReference type="EC" id="3.6.1.27" evidence="1"/>
<dbReference type="EMBL" id="CP000485">
    <property type="protein sequence ID" value="ABK84591.1"/>
    <property type="status" value="ALT_INIT"/>
    <property type="molecule type" value="Genomic_DNA"/>
</dbReference>
<dbReference type="SMR" id="A0RBJ8"/>
<dbReference type="KEGG" id="btl:BALH_1240"/>
<dbReference type="HOGENOM" id="CLU_060296_2_0_9"/>
<dbReference type="GO" id="GO:0005886">
    <property type="term" value="C:plasma membrane"/>
    <property type="evidence" value="ECO:0007669"/>
    <property type="project" value="UniProtKB-SubCell"/>
</dbReference>
<dbReference type="GO" id="GO:0050380">
    <property type="term" value="F:undecaprenyl-diphosphatase activity"/>
    <property type="evidence" value="ECO:0007669"/>
    <property type="project" value="UniProtKB-UniRule"/>
</dbReference>
<dbReference type="GO" id="GO:0071555">
    <property type="term" value="P:cell wall organization"/>
    <property type="evidence" value="ECO:0007669"/>
    <property type="project" value="UniProtKB-KW"/>
</dbReference>
<dbReference type="GO" id="GO:0009252">
    <property type="term" value="P:peptidoglycan biosynthetic process"/>
    <property type="evidence" value="ECO:0007669"/>
    <property type="project" value="UniProtKB-KW"/>
</dbReference>
<dbReference type="GO" id="GO:0008360">
    <property type="term" value="P:regulation of cell shape"/>
    <property type="evidence" value="ECO:0007669"/>
    <property type="project" value="UniProtKB-KW"/>
</dbReference>
<dbReference type="GO" id="GO:0046677">
    <property type="term" value="P:response to antibiotic"/>
    <property type="evidence" value="ECO:0007669"/>
    <property type="project" value="UniProtKB-UniRule"/>
</dbReference>
<dbReference type="HAMAP" id="MF_01006">
    <property type="entry name" value="Undec_diphosphatase"/>
    <property type="match status" value="1"/>
</dbReference>
<dbReference type="InterPro" id="IPR003824">
    <property type="entry name" value="UppP"/>
</dbReference>
<dbReference type="NCBIfam" id="NF001388">
    <property type="entry name" value="PRK00281.1-1"/>
    <property type="match status" value="1"/>
</dbReference>
<dbReference type="NCBIfam" id="NF001389">
    <property type="entry name" value="PRK00281.1-2"/>
    <property type="match status" value="1"/>
</dbReference>
<dbReference type="NCBIfam" id="NF001390">
    <property type="entry name" value="PRK00281.1-4"/>
    <property type="match status" value="1"/>
</dbReference>
<dbReference type="NCBIfam" id="TIGR00753">
    <property type="entry name" value="undec_PP_bacA"/>
    <property type="match status" value="1"/>
</dbReference>
<dbReference type="PANTHER" id="PTHR30622">
    <property type="entry name" value="UNDECAPRENYL-DIPHOSPHATASE"/>
    <property type="match status" value="1"/>
</dbReference>
<dbReference type="PANTHER" id="PTHR30622:SF3">
    <property type="entry name" value="UNDECAPRENYL-DIPHOSPHATASE"/>
    <property type="match status" value="1"/>
</dbReference>
<dbReference type="Pfam" id="PF02673">
    <property type="entry name" value="BacA"/>
    <property type="match status" value="1"/>
</dbReference>
<sequence>MGAVEGLTEFLPVSSTGHMILTGHLIGFDDDRAKVFEVVIQLGSILAVVVIFWKRLWSLVGIGKVTDGPSLNLLHIIIGMIPAGVLGVLFHSAIKEVLFGPGPVVISLVAGGILMIVAEKFSKPSTARTLDEITYKQAFTIGMFQCLALWPGFSRSGSTISGGLLARVSHTAAAEYTFILAVPMMVAASGLDLIKSWDILSTADIPLFATGFITAFVVAMLAIVSFLKLLSRVKLTPFAYYRFILAAVFYFFIM</sequence>
<proteinExistence type="inferred from homology"/>
<organism>
    <name type="scientific">Bacillus thuringiensis (strain Al Hakam)</name>
    <dbReference type="NCBI Taxonomy" id="412694"/>
    <lineage>
        <taxon>Bacteria</taxon>
        <taxon>Bacillati</taxon>
        <taxon>Bacillota</taxon>
        <taxon>Bacilli</taxon>
        <taxon>Bacillales</taxon>
        <taxon>Bacillaceae</taxon>
        <taxon>Bacillus</taxon>
        <taxon>Bacillus cereus group</taxon>
    </lineage>
</organism>
<name>UPPP3_BACAH</name>
<accession>A0RBJ8</accession>
<comment type="function">
    <text evidence="1">Catalyzes the dephosphorylation of undecaprenyl diphosphate (UPP). Confers resistance to bacitracin.</text>
</comment>
<comment type="catalytic activity">
    <reaction evidence="1">
        <text>di-trans,octa-cis-undecaprenyl diphosphate + H2O = di-trans,octa-cis-undecaprenyl phosphate + phosphate + H(+)</text>
        <dbReference type="Rhea" id="RHEA:28094"/>
        <dbReference type="ChEBI" id="CHEBI:15377"/>
        <dbReference type="ChEBI" id="CHEBI:15378"/>
        <dbReference type="ChEBI" id="CHEBI:43474"/>
        <dbReference type="ChEBI" id="CHEBI:58405"/>
        <dbReference type="ChEBI" id="CHEBI:60392"/>
        <dbReference type="EC" id="3.6.1.27"/>
    </reaction>
</comment>
<comment type="subcellular location">
    <subcellularLocation>
        <location evidence="1">Cell membrane</location>
        <topology evidence="1">Multi-pass membrane protein</topology>
    </subcellularLocation>
</comment>
<comment type="miscellaneous">
    <text>Bacitracin is thought to be involved in the inhibition of peptidoglycan synthesis by sequestering undecaprenyl diphosphate, thereby reducing the pool of lipid carrier available.</text>
</comment>
<comment type="similarity">
    <text evidence="1">Belongs to the UppP family.</text>
</comment>
<comment type="sequence caution" evidence="2">
    <conflict type="erroneous initiation">
        <sequence resource="EMBL-CDS" id="ABK84591"/>
    </conflict>
</comment>